<feature type="chain" id="PRO_1000196016" description="Large ribosomal subunit protein bL34">
    <location>
        <begin position="1"/>
        <end position="44"/>
    </location>
</feature>
<accession>B2JJS1</accession>
<keyword id="KW-1185">Reference proteome</keyword>
<keyword id="KW-0687">Ribonucleoprotein</keyword>
<keyword id="KW-0689">Ribosomal protein</keyword>
<reference key="1">
    <citation type="journal article" date="2014" name="Stand. Genomic Sci.">
        <title>Complete genome sequence of Burkholderia phymatum STM815(T), a broad host range and efficient nitrogen-fixing symbiont of Mimosa species.</title>
        <authorList>
            <person name="Moulin L."/>
            <person name="Klonowska A."/>
            <person name="Caroline B."/>
            <person name="Booth K."/>
            <person name="Vriezen J.A."/>
            <person name="Melkonian R."/>
            <person name="James E.K."/>
            <person name="Young J.P."/>
            <person name="Bena G."/>
            <person name="Hauser L."/>
            <person name="Land M."/>
            <person name="Kyrpides N."/>
            <person name="Bruce D."/>
            <person name="Chain P."/>
            <person name="Copeland A."/>
            <person name="Pitluck S."/>
            <person name="Woyke T."/>
            <person name="Lizotte-Waniewski M."/>
            <person name="Bristow J."/>
            <person name="Riley M."/>
        </authorList>
    </citation>
    <scope>NUCLEOTIDE SEQUENCE [LARGE SCALE GENOMIC DNA]</scope>
    <source>
        <strain>DSM 17167 / CIP 108236 / LMG 21445 / STM815</strain>
    </source>
</reference>
<comment type="similarity">
    <text evidence="1">Belongs to the bacterial ribosomal protein bL34 family.</text>
</comment>
<protein>
    <recommendedName>
        <fullName evidence="1">Large ribosomal subunit protein bL34</fullName>
    </recommendedName>
    <alternativeName>
        <fullName evidence="2">50S ribosomal protein L34</fullName>
    </alternativeName>
</protein>
<evidence type="ECO:0000255" key="1">
    <source>
        <dbReference type="HAMAP-Rule" id="MF_00391"/>
    </source>
</evidence>
<evidence type="ECO:0000305" key="2"/>
<organism>
    <name type="scientific">Paraburkholderia phymatum (strain DSM 17167 / CIP 108236 / LMG 21445 / STM815)</name>
    <name type="common">Burkholderia phymatum</name>
    <dbReference type="NCBI Taxonomy" id="391038"/>
    <lineage>
        <taxon>Bacteria</taxon>
        <taxon>Pseudomonadati</taxon>
        <taxon>Pseudomonadota</taxon>
        <taxon>Betaproteobacteria</taxon>
        <taxon>Burkholderiales</taxon>
        <taxon>Burkholderiaceae</taxon>
        <taxon>Paraburkholderia</taxon>
    </lineage>
</organism>
<sequence length="44" mass="5195">MKRTYQPSVTRRKRTHGFRVRMKTAGGRKVINARRAKGRKRLAI</sequence>
<gene>
    <name evidence="1" type="primary">rpmH</name>
    <name type="ordered locus">Bphy_3101</name>
</gene>
<dbReference type="EMBL" id="CP001043">
    <property type="protein sequence ID" value="ACC72269.1"/>
    <property type="molecule type" value="Genomic_DNA"/>
</dbReference>
<dbReference type="RefSeq" id="WP_004198824.1">
    <property type="nucleotide sequence ID" value="NZ_CADFGH010000011.1"/>
</dbReference>
<dbReference type="SMR" id="B2JJS1"/>
<dbReference type="STRING" id="391038.Bphy_3101"/>
<dbReference type="GeneID" id="98107775"/>
<dbReference type="KEGG" id="bph:Bphy_3101"/>
<dbReference type="eggNOG" id="COG0230">
    <property type="taxonomic scope" value="Bacteria"/>
</dbReference>
<dbReference type="HOGENOM" id="CLU_129938_2_0_4"/>
<dbReference type="OrthoDB" id="9804164at2"/>
<dbReference type="Proteomes" id="UP000001192">
    <property type="component" value="Chromosome 1"/>
</dbReference>
<dbReference type="GO" id="GO:1990904">
    <property type="term" value="C:ribonucleoprotein complex"/>
    <property type="evidence" value="ECO:0007669"/>
    <property type="project" value="UniProtKB-KW"/>
</dbReference>
<dbReference type="GO" id="GO:0005840">
    <property type="term" value="C:ribosome"/>
    <property type="evidence" value="ECO:0007669"/>
    <property type="project" value="UniProtKB-KW"/>
</dbReference>
<dbReference type="GO" id="GO:0003735">
    <property type="term" value="F:structural constituent of ribosome"/>
    <property type="evidence" value="ECO:0007669"/>
    <property type="project" value="InterPro"/>
</dbReference>
<dbReference type="GO" id="GO:0006412">
    <property type="term" value="P:translation"/>
    <property type="evidence" value="ECO:0007669"/>
    <property type="project" value="UniProtKB-UniRule"/>
</dbReference>
<dbReference type="FunFam" id="1.10.287.3980:FF:000001">
    <property type="entry name" value="Mitochondrial ribosomal protein L34"/>
    <property type="match status" value="1"/>
</dbReference>
<dbReference type="Gene3D" id="1.10.287.3980">
    <property type="match status" value="1"/>
</dbReference>
<dbReference type="HAMAP" id="MF_00391">
    <property type="entry name" value="Ribosomal_bL34"/>
    <property type="match status" value="1"/>
</dbReference>
<dbReference type="InterPro" id="IPR000271">
    <property type="entry name" value="Ribosomal_bL34"/>
</dbReference>
<dbReference type="InterPro" id="IPR020939">
    <property type="entry name" value="Ribosomal_bL34_CS"/>
</dbReference>
<dbReference type="NCBIfam" id="TIGR01030">
    <property type="entry name" value="rpmH_bact"/>
    <property type="match status" value="1"/>
</dbReference>
<dbReference type="PANTHER" id="PTHR14503:SF4">
    <property type="entry name" value="LARGE RIBOSOMAL SUBUNIT PROTEIN BL34M"/>
    <property type="match status" value="1"/>
</dbReference>
<dbReference type="PANTHER" id="PTHR14503">
    <property type="entry name" value="MITOCHONDRIAL RIBOSOMAL PROTEIN 34 FAMILY MEMBER"/>
    <property type="match status" value="1"/>
</dbReference>
<dbReference type="Pfam" id="PF00468">
    <property type="entry name" value="Ribosomal_L34"/>
    <property type="match status" value="1"/>
</dbReference>
<dbReference type="PROSITE" id="PS00784">
    <property type="entry name" value="RIBOSOMAL_L34"/>
    <property type="match status" value="1"/>
</dbReference>
<name>RL34_PARP8</name>
<proteinExistence type="inferred from homology"/>